<protein>
    <recommendedName>
        <fullName evidence="1">Large ribosomal subunit protein uL22</fullName>
    </recommendedName>
    <alternativeName>
        <fullName evidence="2">50S ribosomal protein L22</fullName>
    </alternativeName>
</protein>
<organism>
    <name type="scientific">Bifidobacterium longum (strain NCC 2705)</name>
    <dbReference type="NCBI Taxonomy" id="206672"/>
    <lineage>
        <taxon>Bacteria</taxon>
        <taxon>Bacillati</taxon>
        <taxon>Actinomycetota</taxon>
        <taxon>Actinomycetes</taxon>
        <taxon>Bifidobacteriales</taxon>
        <taxon>Bifidobacteriaceae</taxon>
        <taxon>Bifidobacterium</taxon>
    </lineage>
</organism>
<evidence type="ECO:0000255" key="1">
    <source>
        <dbReference type="HAMAP-Rule" id="MF_01331"/>
    </source>
</evidence>
<evidence type="ECO:0000305" key="2"/>
<proteinExistence type="inferred from homology"/>
<gene>
    <name evidence="1" type="primary">rplV</name>
    <name type="ordered locus">BL1583</name>
</gene>
<accession>Q8G412</accession>
<reference key="1">
    <citation type="journal article" date="2002" name="Proc. Natl. Acad. Sci. U.S.A.">
        <title>The genome sequence of Bifidobacterium longum reflects its adaptation to the human gastrointestinal tract.</title>
        <authorList>
            <person name="Schell M.A."/>
            <person name="Karmirantzou M."/>
            <person name="Snel B."/>
            <person name="Vilanova D."/>
            <person name="Berger B."/>
            <person name="Pessi G."/>
            <person name="Zwahlen M.-C."/>
            <person name="Desiere F."/>
            <person name="Bork P."/>
            <person name="Delley M."/>
            <person name="Pridmore R.D."/>
            <person name="Arigoni F."/>
        </authorList>
    </citation>
    <scope>NUCLEOTIDE SEQUENCE [LARGE SCALE GENOMIC DNA]</scope>
    <source>
        <strain>NCC 2705</strain>
    </source>
</reference>
<name>RL22_BIFLO</name>
<dbReference type="EMBL" id="AE014295">
    <property type="protein sequence ID" value="AAN25374.1"/>
    <property type="molecule type" value="Genomic_DNA"/>
</dbReference>
<dbReference type="RefSeq" id="NP_696738.1">
    <property type="nucleotide sequence ID" value="NC_004307.2"/>
</dbReference>
<dbReference type="RefSeq" id="WP_007053035.1">
    <property type="nucleotide sequence ID" value="NC_004307.2"/>
</dbReference>
<dbReference type="SMR" id="Q8G412"/>
<dbReference type="STRING" id="206672.BL1583"/>
<dbReference type="EnsemblBacteria" id="AAN25374">
    <property type="protein sequence ID" value="AAN25374"/>
    <property type="gene ID" value="BL1583"/>
</dbReference>
<dbReference type="GeneID" id="69578892"/>
<dbReference type="KEGG" id="blo:BL1583"/>
<dbReference type="PATRIC" id="fig|206672.9.peg.1640"/>
<dbReference type="HOGENOM" id="CLU_083987_3_3_11"/>
<dbReference type="OrthoDB" id="9805969at2"/>
<dbReference type="PhylomeDB" id="Q8G412"/>
<dbReference type="Proteomes" id="UP000000439">
    <property type="component" value="Chromosome"/>
</dbReference>
<dbReference type="GO" id="GO:0022625">
    <property type="term" value="C:cytosolic large ribosomal subunit"/>
    <property type="evidence" value="ECO:0007669"/>
    <property type="project" value="TreeGrafter"/>
</dbReference>
<dbReference type="GO" id="GO:0019843">
    <property type="term" value="F:rRNA binding"/>
    <property type="evidence" value="ECO:0007669"/>
    <property type="project" value="UniProtKB-UniRule"/>
</dbReference>
<dbReference type="GO" id="GO:0003735">
    <property type="term" value="F:structural constituent of ribosome"/>
    <property type="evidence" value="ECO:0007669"/>
    <property type="project" value="InterPro"/>
</dbReference>
<dbReference type="GO" id="GO:0006412">
    <property type="term" value="P:translation"/>
    <property type="evidence" value="ECO:0007669"/>
    <property type="project" value="UniProtKB-UniRule"/>
</dbReference>
<dbReference type="CDD" id="cd00336">
    <property type="entry name" value="Ribosomal_L22"/>
    <property type="match status" value="1"/>
</dbReference>
<dbReference type="Gene3D" id="3.90.470.10">
    <property type="entry name" value="Ribosomal protein L22/L17"/>
    <property type="match status" value="1"/>
</dbReference>
<dbReference type="HAMAP" id="MF_01331_B">
    <property type="entry name" value="Ribosomal_uL22_B"/>
    <property type="match status" value="1"/>
</dbReference>
<dbReference type="InterPro" id="IPR001063">
    <property type="entry name" value="Ribosomal_uL22"/>
</dbReference>
<dbReference type="InterPro" id="IPR005727">
    <property type="entry name" value="Ribosomal_uL22_bac/chlpt-type"/>
</dbReference>
<dbReference type="InterPro" id="IPR047867">
    <property type="entry name" value="Ribosomal_uL22_bac/org-type"/>
</dbReference>
<dbReference type="InterPro" id="IPR018260">
    <property type="entry name" value="Ribosomal_uL22_CS"/>
</dbReference>
<dbReference type="InterPro" id="IPR036394">
    <property type="entry name" value="Ribosomal_uL22_sf"/>
</dbReference>
<dbReference type="NCBIfam" id="TIGR01044">
    <property type="entry name" value="rplV_bact"/>
    <property type="match status" value="1"/>
</dbReference>
<dbReference type="PANTHER" id="PTHR13501">
    <property type="entry name" value="CHLOROPLAST 50S RIBOSOMAL PROTEIN L22-RELATED"/>
    <property type="match status" value="1"/>
</dbReference>
<dbReference type="PANTHER" id="PTHR13501:SF8">
    <property type="entry name" value="LARGE RIBOSOMAL SUBUNIT PROTEIN UL22M"/>
    <property type="match status" value="1"/>
</dbReference>
<dbReference type="Pfam" id="PF00237">
    <property type="entry name" value="Ribosomal_L22"/>
    <property type="match status" value="1"/>
</dbReference>
<dbReference type="SUPFAM" id="SSF54843">
    <property type="entry name" value="Ribosomal protein L22"/>
    <property type="match status" value="1"/>
</dbReference>
<dbReference type="PROSITE" id="PS00464">
    <property type="entry name" value="RIBOSOMAL_L22"/>
    <property type="match status" value="1"/>
</dbReference>
<keyword id="KW-1185">Reference proteome</keyword>
<keyword id="KW-0687">Ribonucleoprotein</keyword>
<keyword id="KW-0689">Ribosomal protein</keyword>
<keyword id="KW-0694">RNA-binding</keyword>
<keyword id="KW-0699">rRNA-binding</keyword>
<sequence>MEAKAIARHVRVTPRKARRMVDLIRGKKATEAVTILKFAPQAAALPVRKTLESAIANARVKADKAGEPFRENDLYIKETYVDEGVTLKRFRARAQGRAARINKRTSHITVVVANKEGAR</sequence>
<comment type="function">
    <text evidence="1">This protein binds specifically to 23S rRNA; its binding is stimulated by other ribosomal proteins, e.g. L4, L17, and L20. It is important during the early stages of 50S assembly. It makes multiple contacts with different domains of the 23S rRNA in the assembled 50S subunit and ribosome (By similarity).</text>
</comment>
<comment type="function">
    <text evidence="1">The globular domain of the protein is located near the polypeptide exit tunnel on the outside of the subunit, while an extended beta-hairpin is found that lines the wall of the exit tunnel in the center of the 70S ribosome.</text>
</comment>
<comment type="subunit">
    <text evidence="1">Part of the 50S ribosomal subunit.</text>
</comment>
<comment type="similarity">
    <text evidence="1">Belongs to the universal ribosomal protein uL22 family.</text>
</comment>
<feature type="chain" id="PRO_0000125122" description="Large ribosomal subunit protein uL22">
    <location>
        <begin position="1"/>
        <end position="119"/>
    </location>
</feature>